<protein>
    <recommendedName>
        <fullName evidence="1">Alanine racemase</fullName>
        <ecNumber evidence="1">5.1.1.1</ecNumber>
    </recommendedName>
</protein>
<proteinExistence type="inferred from homology"/>
<accession>A3PIR7</accession>
<keyword id="KW-0413">Isomerase</keyword>
<keyword id="KW-0663">Pyridoxal phosphate</keyword>
<sequence>MATATLTIDLDAIAANWRALDQMTASDCQTGAVVKADSYGLGAAKVAHALARAGARRFFVATCEEGADVRRALGSGPQICVFSGHMEGDTALIRDFDLTPMLNSIDQLTRHFEALGGQPFGLQLDSGMNRLGLEPGEWEAVAGFALEAGPELLMSHLACSDDPDHPMNAEQLGAFRAMTDGTGVPRSLSATGGILLGPAWHFELTRPGIGLYGGRPFEEARPVVRLSLPVIQVREVEIGEPVGYSNTWTAEHTSTIATVAAGYADGLPRTLSSRATLYAGRVPCPLVGRVSMDLITVDVSHLPEVPETLDILGPHQTPDDLADTAGTIGYEILTSLGRRYQRRYGALAA</sequence>
<evidence type="ECO:0000255" key="1">
    <source>
        <dbReference type="HAMAP-Rule" id="MF_01201"/>
    </source>
</evidence>
<organism>
    <name type="scientific">Cereibacter sphaeroides (strain ATCC 17029 / ATH 2.4.9)</name>
    <name type="common">Rhodobacter sphaeroides</name>
    <dbReference type="NCBI Taxonomy" id="349101"/>
    <lineage>
        <taxon>Bacteria</taxon>
        <taxon>Pseudomonadati</taxon>
        <taxon>Pseudomonadota</taxon>
        <taxon>Alphaproteobacteria</taxon>
        <taxon>Rhodobacterales</taxon>
        <taxon>Paracoccaceae</taxon>
        <taxon>Cereibacter</taxon>
    </lineage>
</organism>
<feature type="chain" id="PRO_1000138617" description="Alanine racemase">
    <location>
        <begin position="1"/>
        <end position="349"/>
    </location>
</feature>
<feature type="active site" description="Proton acceptor; specific for D-alanine" evidence="1">
    <location>
        <position position="35"/>
    </location>
</feature>
<feature type="active site" description="Proton acceptor; specific for L-alanine" evidence="1">
    <location>
        <position position="244"/>
    </location>
</feature>
<feature type="binding site" evidence="1">
    <location>
        <position position="130"/>
    </location>
    <ligand>
        <name>substrate</name>
    </ligand>
</feature>
<feature type="binding site" evidence="1">
    <location>
        <position position="292"/>
    </location>
    <ligand>
        <name>substrate</name>
    </ligand>
</feature>
<feature type="modified residue" description="N6-(pyridoxal phosphate)lysine" evidence="1">
    <location>
        <position position="35"/>
    </location>
</feature>
<gene>
    <name type="primary">alr</name>
    <name type="ordered locus">Rsph17029_1123</name>
</gene>
<dbReference type="EC" id="5.1.1.1" evidence="1"/>
<dbReference type="EMBL" id="CP000577">
    <property type="protein sequence ID" value="ABN76233.1"/>
    <property type="molecule type" value="Genomic_DNA"/>
</dbReference>
<dbReference type="RefSeq" id="WP_009564494.1">
    <property type="nucleotide sequence ID" value="NC_009049.1"/>
</dbReference>
<dbReference type="SMR" id="A3PIR7"/>
<dbReference type="GeneID" id="67446219"/>
<dbReference type="KEGG" id="rsh:Rsph17029_1123"/>
<dbReference type="HOGENOM" id="CLU_028393_1_1_5"/>
<dbReference type="UniPathway" id="UPA00042">
    <property type="reaction ID" value="UER00497"/>
</dbReference>
<dbReference type="GO" id="GO:0005829">
    <property type="term" value="C:cytosol"/>
    <property type="evidence" value="ECO:0007669"/>
    <property type="project" value="TreeGrafter"/>
</dbReference>
<dbReference type="GO" id="GO:0008784">
    <property type="term" value="F:alanine racemase activity"/>
    <property type="evidence" value="ECO:0007669"/>
    <property type="project" value="UniProtKB-UniRule"/>
</dbReference>
<dbReference type="GO" id="GO:0030170">
    <property type="term" value="F:pyridoxal phosphate binding"/>
    <property type="evidence" value="ECO:0007669"/>
    <property type="project" value="UniProtKB-UniRule"/>
</dbReference>
<dbReference type="GO" id="GO:0030632">
    <property type="term" value="P:D-alanine biosynthetic process"/>
    <property type="evidence" value="ECO:0007669"/>
    <property type="project" value="UniProtKB-UniRule"/>
</dbReference>
<dbReference type="CDD" id="cd00430">
    <property type="entry name" value="PLPDE_III_AR"/>
    <property type="match status" value="1"/>
</dbReference>
<dbReference type="Gene3D" id="3.20.20.10">
    <property type="entry name" value="Alanine racemase"/>
    <property type="match status" value="1"/>
</dbReference>
<dbReference type="Gene3D" id="2.40.37.10">
    <property type="entry name" value="Lyase, Ornithine Decarboxylase, Chain A, domain 1"/>
    <property type="match status" value="1"/>
</dbReference>
<dbReference type="HAMAP" id="MF_01201">
    <property type="entry name" value="Ala_racemase"/>
    <property type="match status" value="1"/>
</dbReference>
<dbReference type="InterPro" id="IPR000821">
    <property type="entry name" value="Ala_racemase"/>
</dbReference>
<dbReference type="InterPro" id="IPR009006">
    <property type="entry name" value="Ala_racemase/Decarboxylase_C"/>
</dbReference>
<dbReference type="InterPro" id="IPR011079">
    <property type="entry name" value="Ala_racemase_C"/>
</dbReference>
<dbReference type="InterPro" id="IPR001608">
    <property type="entry name" value="Ala_racemase_N"/>
</dbReference>
<dbReference type="InterPro" id="IPR029066">
    <property type="entry name" value="PLP-binding_barrel"/>
</dbReference>
<dbReference type="NCBIfam" id="TIGR00492">
    <property type="entry name" value="alr"/>
    <property type="match status" value="1"/>
</dbReference>
<dbReference type="PANTHER" id="PTHR30511">
    <property type="entry name" value="ALANINE RACEMASE"/>
    <property type="match status" value="1"/>
</dbReference>
<dbReference type="PANTHER" id="PTHR30511:SF0">
    <property type="entry name" value="ALANINE RACEMASE, CATABOLIC-RELATED"/>
    <property type="match status" value="1"/>
</dbReference>
<dbReference type="Pfam" id="PF00842">
    <property type="entry name" value="Ala_racemase_C"/>
    <property type="match status" value="1"/>
</dbReference>
<dbReference type="Pfam" id="PF01168">
    <property type="entry name" value="Ala_racemase_N"/>
    <property type="match status" value="1"/>
</dbReference>
<dbReference type="PRINTS" id="PR00992">
    <property type="entry name" value="ALARACEMASE"/>
</dbReference>
<dbReference type="SMART" id="SM01005">
    <property type="entry name" value="Ala_racemase_C"/>
    <property type="match status" value="1"/>
</dbReference>
<dbReference type="SUPFAM" id="SSF50621">
    <property type="entry name" value="Alanine racemase C-terminal domain-like"/>
    <property type="match status" value="1"/>
</dbReference>
<dbReference type="SUPFAM" id="SSF51419">
    <property type="entry name" value="PLP-binding barrel"/>
    <property type="match status" value="1"/>
</dbReference>
<name>ALR_CERS1</name>
<reference key="1">
    <citation type="submission" date="2007-02" db="EMBL/GenBank/DDBJ databases">
        <title>Complete sequence of chromosome 1 of Rhodobacter sphaeroides ATCC 17029.</title>
        <authorList>
            <person name="Copeland A."/>
            <person name="Lucas S."/>
            <person name="Lapidus A."/>
            <person name="Barry K."/>
            <person name="Detter J.C."/>
            <person name="Glavina del Rio T."/>
            <person name="Hammon N."/>
            <person name="Israni S."/>
            <person name="Dalin E."/>
            <person name="Tice H."/>
            <person name="Pitluck S."/>
            <person name="Kiss H."/>
            <person name="Brettin T."/>
            <person name="Bruce D."/>
            <person name="Han C."/>
            <person name="Tapia R."/>
            <person name="Gilna P."/>
            <person name="Schmutz J."/>
            <person name="Larimer F."/>
            <person name="Land M."/>
            <person name="Hauser L."/>
            <person name="Kyrpides N."/>
            <person name="Mikhailova N."/>
            <person name="Richardson P."/>
            <person name="Mackenzie C."/>
            <person name="Choudhary M."/>
            <person name="Donohue T.J."/>
            <person name="Kaplan S."/>
        </authorList>
    </citation>
    <scope>NUCLEOTIDE SEQUENCE [LARGE SCALE GENOMIC DNA]</scope>
    <source>
        <strain>ATCC 17029 / ATH 2.4.9</strain>
    </source>
</reference>
<comment type="function">
    <text evidence="1">Catalyzes the interconversion of L-alanine and D-alanine. May also act on other amino acids.</text>
</comment>
<comment type="catalytic activity">
    <reaction evidence="1">
        <text>L-alanine = D-alanine</text>
        <dbReference type="Rhea" id="RHEA:20249"/>
        <dbReference type="ChEBI" id="CHEBI:57416"/>
        <dbReference type="ChEBI" id="CHEBI:57972"/>
        <dbReference type="EC" id="5.1.1.1"/>
    </reaction>
</comment>
<comment type="cofactor">
    <cofactor evidence="1">
        <name>pyridoxal 5'-phosphate</name>
        <dbReference type="ChEBI" id="CHEBI:597326"/>
    </cofactor>
</comment>
<comment type="pathway">
    <text evidence="1">Amino-acid biosynthesis; D-alanine biosynthesis; D-alanine from L-alanine: step 1/1.</text>
</comment>
<comment type="similarity">
    <text evidence="1">Belongs to the alanine racemase family.</text>
</comment>